<protein>
    <recommendedName>
        <fullName evidence="10">Alpha-toxin Amm8</fullName>
    </recommendedName>
    <alternativeName>
        <fullName evidence="9">Alpha-anatoxin Amm VIII</fullName>
        <shortName evidence="6 7 8">Amm VIII</shortName>
        <shortName evidence="9">AmmVIII</shortName>
    </alternativeName>
    <alternativeName>
        <fullName>Neurotoxin 8</fullName>
    </alternativeName>
    <alternativeName>
        <fullName>P4</fullName>
    </alternativeName>
</protein>
<feature type="signal peptide" evidence="2">
    <location>
        <begin position="1"/>
        <end position="19"/>
    </location>
</feature>
<feature type="chain" id="PRO_0000035232" description="Alpha-toxin Amm8" evidence="2">
    <location>
        <begin position="20"/>
        <end position="84"/>
    </location>
</feature>
<feature type="propeptide" id="PRO_0000035233" description="Removed by a carboxypeptidase">
    <location>
        <position position="85"/>
    </location>
</feature>
<feature type="domain" description="LCN-type CS-alpha/beta" evidence="1">
    <location>
        <begin position="21"/>
        <end position="83"/>
    </location>
</feature>
<feature type="disulfide bond" evidence="1">
    <location>
        <begin position="31"/>
        <end position="82"/>
    </location>
</feature>
<feature type="disulfide bond" evidence="1">
    <location>
        <begin position="35"/>
        <end position="55"/>
    </location>
</feature>
<feature type="disulfide bond" evidence="1">
    <location>
        <begin position="41"/>
        <end position="65"/>
    </location>
</feature>
<feature type="disulfide bond" evidence="1">
    <location>
        <begin position="45"/>
        <end position="67"/>
    </location>
</feature>
<proteinExistence type="evidence at protein level"/>
<keyword id="KW-0903">Direct protein sequencing</keyword>
<keyword id="KW-1015">Disulfide bond</keyword>
<keyword id="KW-0872">Ion channel impairing toxin</keyword>
<keyword id="KW-0528">Neurotoxin</keyword>
<keyword id="KW-0964">Secreted</keyword>
<keyword id="KW-0732">Signal</keyword>
<keyword id="KW-0800">Toxin</keyword>
<keyword id="KW-0738">Voltage-gated sodium channel impairing toxin</keyword>
<accession>Q7YXD3</accession>
<accession>Q2YHM2</accession>
<organism>
    <name type="scientific">Androctonus mauritanicus mauritanicus</name>
    <name type="common">Scorpion</name>
    <dbReference type="NCBI Taxonomy" id="6860"/>
    <lineage>
        <taxon>Eukaryota</taxon>
        <taxon>Metazoa</taxon>
        <taxon>Ecdysozoa</taxon>
        <taxon>Arthropoda</taxon>
        <taxon>Chelicerata</taxon>
        <taxon>Arachnida</taxon>
        <taxon>Scorpiones</taxon>
        <taxon>Buthida</taxon>
        <taxon>Buthoidea</taxon>
        <taxon>Buthidae</taxon>
        <taxon>Androctonus</taxon>
    </lineage>
</organism>
<evidence type="ECO:0000255" key="1">
    <source>
        <dbReference type="PROSITE-ProRule" id="PRU01210"/>
    </source>
</evidence>
<evidence type="ECO:0000269" key="2">
    <source>
    </source>
</evidence>
<evidence type="ECO:0000269" key="3">
    <source>
    </source>
</evidence>
<evidence type="ECO:0000269" key="4">
    <source>
    </source>
</evidence>
<evidence type="ECO:0000269" key="5">
    <source>
    </source>
</evidence>
<evidence type="ECO:0000303" key="6">
    <source>
    </source>
</evidence>
<evidence type="ECO:0000303" key="7">
    <source>
    </source>
</evidence>
<evidence type="ECO:0000303" key="8">
    <source>
    </source>
</evidence>
<evidence type="ECO:0000303" key="9">
    <source>
    </source>
</evidence>
<evidence type="ECO:0000305" key="10"/>
<evidence type="ECO:0000305" key="11">
    <source>
    </source>
</evidence>
<comment type="function">
    <text evidence="2 4 5">Alpha toxins bind voltage-independently at site-3 of sodium channels (Nav) and inhibit the inactivation of the activated channels, thereby blocking neuronal transmission (PubMed:12911331). The toxin principally slows the inactivation process of TTX-sensitive sodium channels (PubMed:23685008). It discriminates neuronal versus muscular sodium channel, as it is more potent on rat brain Nav1.2/SCN2A (EC(50)=29 nM) than on rat skeletal muscle Nav1.4/SCN4A (EC(50)=416 nM) (PubMed:12911331). It also shows a weak activity on Nav1.7/SCN9A (EC(50)=1.76 uM) (PubMed:23685008). In vivo, the toxin produces pain hypersensibility to mechanical and thermal stimuli (PubMed:23685008). It also exhibits potent analgesic activity (when injected intraperitoneally), increasing hot plate and tail flick withdrawal latencies in a dose-dependent fashion (PubMed:20619318). This paradoxical analgesic action, is significantly suppressed by opioid receptor antagonists, suggesting a pain-induced analgesia mechanism that involves an endogenous opioid system (PubMed:20619318). This led to hypothesis that pain relief induced by peripheral administration of Amm VIII may result from sensitization of primary afferent neurons and subsequent activation of an opioid-dependent noxious inhibitory control (PubMed:20619318).</text>
</comment>
<comment type="subcellular location">
    <subcellularLocation>
        <location evidence="2">Secreted</location>
    </subcellularLocation>
</comment>
<comment type="tissue specificity">
    <text evidence="11">Expressed by the venom gland.</text>
</comment>
<comment type="domain">
    <text evidence="10">Has the structural arrangement of an alpha-helix connected to antiparallel beta-sheets by disulfide bonds (CS-alpha/beta).</text>
</comment>
<comment type="mass spectrometry"/>
<comment type="mass spectrometry"/>
<comment type="toxic dose">
    <text evidence="2">LD(50) is 11.25 ug/kg by intracerebroventricular injection into mice but is not toxic (&gt;1 mg/mouse) when injected subcutaneously.</text>
</comment>
<comment type="miscellaneous">
    <text evidence="5">Negative results: does not act on Nav1.8/SCN10A and Nav1.9/SCN11A when tested on TTX-resistant sodium channels.</text>
</comment>
<comment type="similarity">
    <text evidence="10">Belongs to the long (4 C-C) scorpion toxin superfamily. Sodium channel inhibitor family. Alpha subfamily.</text>
</comment>
<reference key="1">
    <citation type="journal article" date="2003" name="Biochem. J.">
        <title>Characterization of Amm VIII from Androctonus mauretanicus mauretanicus: a new scorpion toxin that discriminates between neuronal and skeletal sodium channels.</title>
        <authorList>
            <person name="Alami M."/>
            <person name="Vacher H."/>
            <person name="Bosmans F."/>
            <person name="Devaux C."/>
            <person name="Rosso J.-P."/>
            <person name="Bougis P.E."/>
            <person name="Tytgat J."/>
            <person name="Darbon H."/>
            <person name="Martin-Eauclaire M.-F."/>
        </authorList>
    </citation>
    <scope>NUCLEOTIDE SEQUENCE [MRNA]</scope>
    <scope>PROTEIN SEQUENCE OF 20-84</scope>
    <scope>FUNCTION</scope>
    <scope>MASS SPECTROMETRY</scope>
    <scope>TOXIC DOSE</scope>
    <scope>SUBCELLULAR LOCATION</scope>
    <source>
        <tissue>Venom</tissue>
        <tissue>Venom gland</tissue>
    </source>
</reference>
<reference key="2">
    <citation type="journal article" date="2006" name="Toxicon">
        <title>Genomic characterisation of the toxin Amm VIII from the scorpion Androctonus mauretanicus mauretanicus.</title>
        <authorList>
            <person name="Alami M."/>
            <person name="Ceard B."/>
            <person name="Legros C."/>
            <person name="Bougis P.E."/>
            <person name="Martin-Eauclaire M.-F."/>
        </authorList>
    </citation>
    <scope>NUCLEOTIDE SEQUENCE [GENOMIC DNA]</scope>
    <source>
        <tissue>Muscle</tissue>
    </source>
</reference>
<reference key="3">
    <citation type="journal article" date="2008" name="Toxicon">
        <title>New analysis of the toxic compounds from the Androctonus mauretanicus mauretanicus scorpion venom.</title>
        <authorList>
            <person name="Oukkache N."/>
            <person name="Rosso J.-P."/>
            <person name="Alami M."/>
            <person name="Ghalim N."/>
            <person name="Saile R."/>
            <person name="Hassar M."/>
            <person name="Bougis P.E."/>
            <person name="Martin-Eauclaire M.-F."/>
        </authorList>
    </citation>
    <scope>PARTIAL PROTEIN SEQUENCE</scope>
    <scope>MASS SPECTROMETRY</scope>
    <source>
        <tissue>Venom</tissue>
    </source>
</reference>
<reference key="4">
    <citation type="journal article" date="2010" name="Neurosci. Lett.">
        <title>Involvement of endogenous opioid system in scorpion toxin-induced antinociception in mice.</title>
        <authorList>
            <person name="Martin-Eauclaire M.F."/>
            <person name="Abbas N."/>
            <person name="Sauze N."/>
            <person name="Mercier L."/>
            <person name="Berge-Lefranc J.L."/>
            <person name="Condo J."/>
            <person name="Bougis P.E."/>
            <person name="Guieu R."/>
        </authorList>
    </citation>
    <scope>FUNCTION</scope>
</reference>
<reference key="5">
    <citation type="journal article" date="2013" name="Pain">
        <title>The scorpion toxin Amm VIII induces pain hypersensitivity through gain-of-function of TTX-sensitive Na[+] channels.</title>
        <authorList>
            <person name="Abbas N."/>
            <person name="Gaudioso-Tyzra C."/>
            <person name="Bonnet C."/>
            <person name="Gabriac M."/>
            <person name="Amsalem M."/>
            <person name="Lonigro A."/>
            <person name="Padilla F."/>
            <person name="Crest M."/>
            <person name="Martin-Eauclaire M.F."/>
            <person name="Delmas P."/>
        </authorList>
    </citation>
    <scope>FUNCTION</scope>
</reference>
<name>SCX8_ANDMA</name>
<dbReference type="EMBL" id="AJ496808">
    <property type="protein sequence ID" value="CAD43222.1"/>
    <property type="molecule type" value="mRNA"/>
</dbReference>
<dbReference type="EMBL" id="AM159181">
    <property type="protein sequence ID" value="CAJ43744.1"/>
    <property type="molecule type" value="Genomic_DNA"/>
</dbReference>
<dbReference type="SMR" id="Q7YXD3"/>
<dbReference type="GO" id="GO:0005576">
    <property type="term" value="C:extracellular region"/>
    <property type="evidence" value="ECO:0007669"/>
    <property type="project" value="UniProtKB-SubCell"/>
</dbReference>
<dbReference type="GO" id="GO:0019871">
    <property type="term" value="F:sodium channel inhibitor activity"/>
    <property type="evidence" value="ECO:0007669"/>
    <property type="project" value="InterPro"/>
</dbReference>
<dbReference type="GO" id="GO:0090729">
    <property type="term" value="F:toxin activity"/>
    <property type="evidence" value="ECO:0007669"/>
    <property type="project" value="UniProtKB-KW"/>
</dbReference>
<dbReference type="GO" id="GO:0006952">
    <property type="term" value="P:defense response"/>
    <property type="evidence" value="ECO:0007669"/>
    <property type="project" value="InterPro"/>
</dbReference>
<dbReference type="CDD" id="cd23106">
    <property type="entry name" value="neurotoxins_LC_scorpion"/>
    <property type="match status" value="1"/>
</dbReference>
<dbReference type="Gene3D" id="3.30.30.10">
    <property type="entry name" value="Knottin, scorpion toxin-like"/>
    <property type="match status" value="1"/>
</dbReference>
<dbReference type="InterPro" id="IPR044062">
    <property type="entry name" value="LCN-type_CS_alpha_beta_dom"/>
</dbReference>
<dbReference type="InterPro" id="IPR003614">
    <property type="entry name" value="Scorpion_toxin-like"/>
</dbReference>
<dbReference type="InterPro" id="IPR036574">
    <property type="entry name" value="Scorpion_toxin-like_sf"/>
</dbReference>
<dbReference type="InterPro" id="IPR018218">
    <property type="entry name" value="Scorpion_toxinL"/>
</dbReference>
<dbReference type="InterPro" id="IPR002061">
    <property type="entry name" value="Scorpion_toxinL/defensin"/>
</dbReference>
<dbReference type="Pfam" id="PF00537">
    <property type="entry name" value="Toxin_3"/>
    <property type="match status" value="1"/>
</dbReference>
<dbReference type="PRINTS" id="PR00285">
    <property type="entry name" value="SCORPNTOXIN"/>
</dbReference>
<dbReference type="SMART" id="SM00505">
    <property type="entry name" value="Knot1"/>
    <property type="match status" value="1"/>
</dbReference>
<dbReference type="SUPFAM" id="SSF57095">
    <property type="entry name" value="Scorpion toxin-like"/>
    <property type="match status" value="1"/>
</dbReference>
<dbReference type="PROSITE" id="PS51863">
    <property type="entry name" value="LCN_CSAB"/>
    <property type="match status" value="1"/>
</dbReference>
<sequence>MNYLVMISLALLFMTGVESLKDGYIVNDINCTYFCGRNAYCNELCIKLKGESGYCQWASPYGNSCYCYKLPDHVRTKGPGRCNDR</sequence>